<gene>
    <name type="primary">HBA</name>
</gene>
<sequence length="141" mass="15122">VLSATDKANVKTFWGKLGGHGGEYGGEALDRMFQAHPTTKTYFPHFDLNPGSAQVKGHGKKVADALTTAVNNLDDVPGALSALSDLHAHKLRVDPVNFKLLSHCLLVTLALHHPADFTPAVHASLDKFLATVATVLTSKYR</sequence>
<name>HBA_ERIEU</name>
<organism>
    <name type="scientific">Erinaceus europaeus</name>
    <name type="common">Western European hedgehog</name>
    <dbReference type="NCBI Taxonomy" id="9365"/>
    <lineage>
        <taxon>Eukaryota</taxon>
        <taxon>Metazoa</taxon>
        <taxon>Chordata</taxon>
        <taxon>Craniata</taxon>
        <taxon>Vertebrata</taxon>
        <taxon>Euteleostomi</taxon>
        <taxon>Mammalia</taxon>
        <taxon>Eutheria</taxon>
        <taxon>Laurasiatheria</taxon>
        <taxon>Eulipotyphla</taxon>
        <taxon>Erinaceidae</taxon>
        <taxon>Erinaceinae</taxon>
        <taxon>Erinaceus</taxon>
    </lineage>
</organism>
<keyword id="KW-0007">Acetylation</keyword>
<keyword id="KW-0903">Direct protein sequencing</keyword>
<keyword id="KW-0349">Heme</keyword>
<keyword id="KW-0408">Iron</keyword>
<keyword id="KW-0479">Metal-binding</keyword>
<keyword id="KW-0561">Oxygen transport</keyword>
<keyword id="KW-0597">Phosphoprotein</keyword>
<keyword id="KW-1185">Reference proteome</keyword>
<keyword id="KW-0813">Transport</keyword>
<accession>P01949</accession>
<protein>
    <recommendedName>
        <fullName>Hemoglobin subunit alpha</fullName>
    </recommendedName>
    <alternativeName>
        <fullName>Alpha-globin</fullName>
    </alternativeName>
    <alternativeName>
        <fullName>Hemoglobin alpha chain</fullName>
    </alternativeName>
    <component>
        <recommendedName>
            <fullName evidence="2">Hemopressin</fullName>
        </recommendedName>
    </component>
</protein>
<evidence type="ECO:0000250" key="1">
    <source>
        <dbReference type="UniProtKB" id="P01942"/>
    </source>
</evidence>
<evidence type="ECO:0000250" key="2">
    <source>
        <dbReference type="UniProtKB" id="P01946"/>
    </source>
</evidence>
<evidence type="ECO:0000250" key="3">
    <source>
        <dbReference type="UniProtKB" id="P69905"/>
    </source>
</evidence>
<evidence type="ECO:0000255" key="4">
    <source>
        <dbReference type="PROSITE-ProRule" id="PRU00238"/>
    </source>
</evidence>
<reference key="1">
    <citation type="journal article" date="1979" name="J. Biochem.">
        <title>Amino acid sequences of the alpha and beta chains of adult hemoglobin of the European hedgehog, Erinaceus europaeus.</title>
        <authorList>
            <person name="Maita T."/>
            <person name="Araya A."/>
            <person name="Matsuda G."/>
            <person name="Goodman M."/>
        </authorList>
    </citation>
    <scope>PROTEIN SEQUENCE</scope>
</reference>
<feature type="chain" id="PRO_0000052632" description="Hemoglobin subunit alpha">
    <location>
        <begin position="1"/>
        <end position="141"/>
    </location>
</feature>
<feature type="peptide" id="PRO_0000455876" description="Hemopressin" evidence="2">
    <location>
        <begin position="95"/>
        <end position="103"/>
    </location>
</feature>
<feature type="domain" description="Globin" evidence="4">
    <location>
        <begin position="1"/>
        <end position="141"/>
    </location>
</feature>
<feature type="binding site" evidence="4">
    <location>
        <position position="58"/>
    </location>
    <ligand>
        <name>O2</name>
        <dbReference type="ChEBI" id="CHEBI:15379"/>
    </ligand>
</feature>
<feature type="binding site" description="proximal binding residue" evidence="4">
    <location>
        <position position="87"/>
    </location>
    <ligand>
        <name>heme b</name>
        <dbReference type="ChEBI" id="CHEBI:60344"/>
    </ligand>
    <ligandPart>
        <name>Fe</name>
        <dbReference type="ChEBI" id="CHEBI:18248"/>
    </ligandPart>
</feature>
<feature type="modified residue" description="Phosphoserine" evidence="3">
    <location>
        <position position="3"/>
    </location>
</feature>
<feature type="modified residue" description="N6-succinyllysine" evidence="1">
    <location>
        <position position="7"/>
    </location>
</feature>
<feature type="modified residue" description="N6-succinyllysine" evidence="1">
    <location>
        <position position="11"/>
    </location>
</feature>
<feature type="modified residue" description="N6-acetyllysine; alternate" evidence="3">
    <location>
        <position position="16"/>
    </location>
</feature>
<feature type="modified residue" description="N6-succinyllysine; alternate" evidence="1">
    <location>
        <position position="16"/>
    </location>
</feature>
<feature type="modified residue" description="Phosphotyrosine" evidence="3">
    <location>
        <position position="24"/>
    </location>
</feature>
<feature type="modified residue" description="N6-succinyllysine" evidence="1">
    <location>
        <position position="40"/>
    </location>
</feature>
<feature type="modified residue" description="Phosphoserine" evidence="1">
    <location>
        <position position="102"/>
    </location>
</feature>
<feature type="modified residue" description="Phosphothreonine" evidence="1">
    <location>
        <position position="108"/>
    </location>
</feature>
<feature type="modified residue" description="Phosphoserine" evidence="1">
    <location>
        <position position="124"/>
    </location>
</feature>
<feature type="modified residue" description="Phosphothreonine" evidence="1">
    <location>
        <position position="134"/>
    </location>
</feature>
<feature type="modified residue" description="Phosphothreonine" evidence="1">
    <location>
        <position position="137"/>
    </location>
</feature>
<feature type="modified residue" description="Phosphoserine" evidence="1">
    <location>
        <position position="138"/>
    </location>
</feature>
<proteinExistence type="evidence at protein level"/>
<comment type="function">
    <text>Involved in oxygen transport from the lung to the various peripheral tissues.</text>
</comment>
<comment type="function">
    <molecule>Hemopressin</molecule>
    <text evidence="2">Hemopressin acts as an antagonist peptide of the cannabinoid receptor CNR1. Hemopressin-binding efficiently blocks cannabinoid receptor CNR1 and subsequent signaling.</text>
</comment>
<comment type="subunit">
    <text>Heterotetramer of two alpha chains and two beta chains.</text>
</comment>
<comment type="tissue specificity">
    <text>Red blood cells.</text>
</comment>
<comment type="similarity">
    <text evidence="4">Belongs to the globin family.</text>
</comment>
<dbReference type="PIR" id="A02271">
    <property type="entry name" value="HAHH"/>
</dbReference>
<dbReference type="SMR" id="P01949"/>
<dbReference type="FunCoup" id="P01949">
    <property type="interactions" value="65"/>
</dbReference>
<dbReference type="STRING" id="9365.ENSEEUP00000006661"/>
<dbReference type="eggNOG" id="KOG3378">
    <property type="taxonomic scope" value="Eukaryota"/>
</dbReference>
<dbReference type="HOGENOM" id="CLU_003827_10_2_1"/>
<dbReference type="InParanoid" id="P01949"/>
<dbReference type="OMA" id="MFTSFPT"/>
<dbReference type="TreeFam" id="TF332328"/>
<dbReference type="Proteomes" id="UP000079721">
    <property type="component" value="Unplaced"/>
</dbReference>
<dbReference type="GO" id="GO:0072562">
    <property type="term" value="C:blood microparticle"/>
    <property type="evidence" value="ECO:0007669"/>
    <property type="project" value="TreeGrafter"/>
</dbReference>
<dbReference type="GO" id="GO:0031838">
    <property type="term" value="C:haptoglobin-hemoglobin complex"/>
    <property type="evidence" value="ECO:0007669"/>
    <property type="project" value="TreeGrafter"/>
</dbReference>
<dbReference type="GO" id="GO:0005833">
    <property type="term" value="C:hemoglobin complex"/>
    <property type="evidence" value="ECO:0007669"/>
    <property type="project" value="InterPro"/>
</dbReference>
<dbReference type="GO" id="GO:0031720">
    <property type="term" value="F:haptoglobin binding"/>
    <property type="evidence" value="ECO:0007669"/>
    <property type="project" value="TreeGrafter"/>
</dbReference>
<dbReference type="GO" id="GO:0020037">
    <property type="term" value="F:heme binding"/>
    <property type="evidence" value="ECO:0007669"/>
    <property type="project" value="InterPro"/>
</dbReference>
<dbReference type="GO" id="GO:0005506">
    <property type="term" value="F:iron ion binding"/>
    <property type="evidence" value="ECO:0007669"/>
    <property type="project" value="InterPro"/>
</dbReference>
<dbReference type="GO" id="GO:0043177">
    <property type="term" value="F:organic acid binding"/>
    <property type="evidence" value="ECO:0007669"/>
    <property type="project" value="TreeGrafter"/>
</dbReference>
<dbReference type="GO" id="GO:0019825">
    <property type="term" value="F:oxygen binding"/>
    <property type="evidence" value="ECO:0007669"/>
    <property type="project" value="InterPro"/>
</dbReference>
<dbReference type="GO" id="GO:0005344">
    <property type="term" value="F:oxygen carrier activity"/>
    <property type="evidence" value="ECO:0007669"/>
    <property type="project" value="UniProtKB-KW"/>
</dbReference>
<dbReference type="GO" id="GO:0004601">
    <property type="term" value="F:peroxidase activity"/>
    <property type="evidence" value="ECO:0007669"/>
    <property type="project" value="TreeGrafter"/>
</dbReference>
<dbReference type="GO" id="GO:0042744">
    <property type="term" value="P:hydrogen peroxide catabolic process"/>
    <property type="evidence" value="ECO:0007669"/>
    <property type="project" value="TreeGrafter"/>
</dbReference>
<dbReference type="CDD" id="cd08927">
    <property type="entry name" value="Hb-alpha-like"/>
    <property type="match status" value="1"/>
</dbReference>
<dbReference type="FunFam" id="1.10.490.10:FF:000002">
    <property type="entry name" value="Hemoglobin subunit alpha"/>
    <property type="match status" value="1"/>
</dbReference>
<dbReference type="Gene3D" id="1.10.490.10">
    <property type="entry name" value="Globins"/>
    <property type="match status" value="1"/>
</dbReference>
<dbReference type="InterPro" id="IPR000971">
    <property type="entry name" value="Globin"/>
</dbReference>
<dbReference type="InterPro" id="IPR009050">
    <property type="entry name" value="Globin-like_sf"/>
</dbReference>
<dbReference type="InterPro" id="IPR012292">
    <property type="entry name" value="Globin/Proto"/>
</dbReference>
<dbReference type="InterPro" id="IPR002338">
    <property type="entry name" value="Hemoglobin_a-typ"/>
</dbReference>
<dbReference type="InterPro" id="IPR050056">
    <property type="entry name" value="Hemoglobin_oxygen_transport"/>
</dbReference>
<dbReference type="InterPro" id="IPR002339">
    <property type="entry name" value="Hemoglobin_pi"/>
</dbReference>
<dbReference type="PANTHER" id="PTHR11442">
    <property type="entry name" value="HEMOGLOBIN FAMILY MEMBER"/>
    <property type="match status" value="1"/>
</dbReference>
<dbReference type="PANTHER" id="PTHR11442:SF48">
    <property type="entry name" value="HEMOGLOBIN SUBUNIT ALPHA"/>
    <property type="match status" value="1"/>
</dbReference>
<dbReference type="Pfam" id="PF00042">
    <property type="entry name" value="Globin"/>
    <property type="match status" value="1"/>
</dbReference>
<dbReference type="PRINTS" id="PR00612">
    <property type="entry name" value="ALPHAHAEM"/>
</dbReference>
<dbReference type="PRINTS" id="PR00815">
    <property type="entry name" value="PIHAEM"/>
</dbReference>
<dbReference type="SUPFAM" id="SSF46458">
    <property type="entry name" value="Globin-like"/>
    <property type="match status" value="1"/>
</dbReference>
<dbReference type="PROSITE" id="PS01033">
    <property type="entry name" value="GLOBIN"/>
    <property type="match status" value="1"/>
</dbReference>